<sequence>MEIERINEDTIKFYISYLDLEERGFNQEDVWYDREKSEELFWDMMDELKYEEEFSPEGPLWIQVQALKHGLEVFVTKATIGGKGEDGFDVTLSSPDELAEEKIEKLLEENFNPVKKEALGDDDTLEFILEFRDFEDAISLSRATGLENLVTKLYSYQGKYYLNVEFPENKYDESNIDNAVSILLEYGLESNLTGYMLAEYGKVIFDVPALKQIRKHF</sequence>
<evidence type="ECO:0000255" key="1">
    <source>
        <dbReference type="HAMAP-Rule" id="MF_01124"/>
    </source>
</evidence>
<feature type="chain" id="PRO_1000213625" description="Adapter protein MecA">
    <location>
        <begin position="1"/>
        <end position="217"/>
    </location>
</feature>
<accession>C1KXE5</accession>
<dbReference type="EMBL" id="FM242711">
    <property type="protein sequence ID" value="CAS05974.1"/>
    <property type="molecule type" value="Genomic_DNA"/>
</dbReference>
<dbReference type="RefSeq" id="WP_003724608.1">
    <property type="nucleotide sequence ID" value="NC_012488.1"/>
</dbReference>
<dbReference type="SMR" id="C1KXE5"/>
<dbReference type="KEGG" id="lmc:Lm4b_02217"/>
<dbReference type="HOGENOM" id="CLU_071496_2_1_9"/>
<dbReference type="GO" id="GO:0030674">
    <property type="term" value="F:protein-macromolecule adaptor activity"/>
    <property type="evidence" value="ECO:0007669"/>
    <property type="project" value="UniProtKB-UniRule"/>
</dbReference>
<dbReference type="Gene3D" id="3.30.70.1950">
    <property type="match status" value="1"/>
</dbReference>
<dbReference type="HAMAP" id="MF_01124">
    <property type="entry name" value="MecA"/>
    <property type="match status" value="1"/>
</dbReference>
<dbReference type="InterPro" id="IPR038471">
    <property type="entry name" value="MecA_C_sf"/>
</dbReference>
<dbReference type="InterPro" id="IPR008681">
    <property type="entry name" value="Neg-reg_MecA"/>
</dbReference>
<dbReference type="NCBIfam" id="NF002644">
    <property type="entry name" value="PRK02315.1-5"/>
    <property type="match status" value="1"/>
</dbReference>
<dbReference type="PANTHER" id="PTHR39161">
    <property type="entry name" value="ADAPTER PROTEIN MECA"/>
    <property type="match status" value="1"/>
</dbReference>
<dbReference type="PANTHER" id="PTHR39161:SF1">
    <property type="entry name" value="ADAPTER PROTEIN MECA 1"/>
    <property type="match status" value="1"/>
</dbReference>
<dbReference type="Pfam" id="PF05389">
    <property type="entry name" value="MecA"/>
    <property type="match status" value="1"/>
</dbReference>
<dbReference type="PIRSF" id="PIRSF029008">
    <property type="entry name" value="MecA"/>
    <property type="match status" value="1"/>
</dbReference>
<comment type="function">
    <text evidence="1">Enables the recognition and targeting of unfolded and aggregated proteins to the ClpC protease or to other proteins involved in proteolysis.</text>
</comment>
<comment type="subunit">
    <text evidence="1">Homodimer.</text>
</comment>
<comment type="domain">
    <text>The N-terminal domain probably binds unfolded/aggregated proteins; the C-terminal domain interacts with ClpC.</text>
</comment>
<comment type="similarity">
    <text evidence="1">Belongs to the MecA family.</text>
</comment>
<reference key="1">
    <citation type="journal article" date="2012" name="BMC Genomics">
        <title>Comparative genomics and transcriptomics of lineages I, II, and III strains of Listeria monocytogenes.</title>
        <authorList>
            <person name="Hain T."/>
            <person name="Ghai R."/>
            <person name="Billion A."/>
            <person name="Kuenne C.T."/>
            <person name="Steinweg C."/>
            <person name="Izar B."/>
            <person name="Mohamed W."/>
            <person name="Mraheil M."/>
            <person name="Domann E."/>
            <person name="Schaffrath S."/>
            <person name="Karst U."/>
            <person name="Goesmann A."/>
            <person name="Oehm S."/>
            <person name="Puhler A."/>
            <person name="Merkl R."/>
            <person name="Vorwerk S."/>
            <person name="Glaser P."/>
            <person name="Garrido P."/>
            <person name="Rusniok C."/>
            <person name="Buchrieser C."/>
            <person name="Goebel W."/>
            <person name="Chakraborty T."/>
        </authorList>
    </citation>
    <scope>NUCLEOTIDE SEQUENCE [LARGE SCALE GENOMIC DNA]</scope>
    <source>
        <strain>CLIP80459</strain>
    </source>
</reference>
<proteinExistence type="inferred from homology"/>
<name>MECA_LISMC</name>
<organism>
    <name type="scientific">Listeria monocytogenes serotype 4b (strain CLIP80459)</name>
    <dbReference type="NCBI Taxonomy" id="568819"/>
    <lineage>
        <taxon>Bacteria</taxon>
        <taxon>Bacillati</taxon>
        <taxon>Bacillota</taxon>
        <taxon>Bacilli</taxon>
        <taxon>Bacillales</taxon>
        <taxon>Listeriaceae</taxon>
        <taxon>Listeria</taxon>
    </lineage>
</organism>
<gene>
    <name evidence="1" type="primary">mecA</name>
    <name type="ordered locus">Lm4b_02217</name>
</gene>
<protein>
    <recommendedName>
        <fullName evidence="1">Adapter protein MecA</fullName>
    </recommendedName>
</protein>